<organism>
    <name type="scientific">Clostridium botulinum (strain Eklund 17B / Type B)</name>
    <dbReference type="NCBI Taxonomy" id="935198"/>
    <lineage>
        <taxon>Bacteria</taxon>
        <taxon>Bacillati</taxon>
        <taxon>Bacillota</taxon>
        <taxon>Clostridia</taxon>
        <taxon>Eubacteriales</taxon>
        <taxon>Clostridiaceae</taxon>
        <taxon>Clostridium</taxon>
    </lineage>
</organism>
<keyword id="KW-0067">ATP-binding</keyword>
<keyword id="KW-0963">Cytoplasm</keyword>
<keyword id="KW-0227">DNA damage</keyword>
<keyword id="KW-0233">DNA recombination</keyword>
<keyword id="KW-0234">DNA repair</keyword>
<keyword id="KW-0238">DNA-binding</keyword>
<keyword id="KW-0547">Nucleotide-binding</keyword>
<keyword id="KW-0742">SOS response</keyword>
<feature type="chain" id="PRO_1000114326" description="Protein RecA">
    <location>
        <begin position="1"/>
        <end position="356"/>
    </location>
</feature>
<feature type="binding site" evidence="1">
    <location>
        <begin position="68"/>
        <end position="75"/>
    </location>
    <ligand>
        <name>ATP</name>
        <dbReference type="ChEBI" id="CHEBI:30616"/>
    </ligand>
</feature>
<sequence>MANIDINKLKAIENAMGQIEKQFGKGSVMKLGENSVLNIDAISTGCLDLDIALGIGGVPKGRIVEIYGPESSGKTTIALHIAAEAQKKGGAVGFIDAEHALDPSYARNLGVDTENLIVSQPDTGEQGLEIAEALVRSGAIDVIIVDSVAALVPKAEIEGEMGDSHIGLQARLMSQALRKLAGTISKTNCIAIFINQLREKVGVMFGSPETTTGGRALKFYASVRLDVRRIDSIKQGDGIVGNRTRIKVTKNKVAPPFKQAEFDIMYNEGISRQGNIVDVGVKEEIVQKSGAWFSYGDIRLGQGRENAKQYLKENPEVALDIENQIREKHNLPLMDAVIKETAQEVNGKENKEQSDK</sequence>
<name>RECA_CLOBB</name>
<accession>B2TJ69</accession>
<protein>
    <recommendedName>
        <fullName evidence="1">Protein RecA</fullName>
    </recommendedName>
    <alternativeName>
        <fullName evidence="1">Recombinase A</fullName>
    </alternativeName>
</protein>
<proteinExistence type="inferred from homology"/>
<reference key="1">
    <citation type="submission" date="2008-04" db="EMBL/GenBank/DDBJ databases">
        <title>Complete sequence of Clostridium botulinum strain Eklund.</title>
        <authorList>
            <person name="Brinkac L.M."/>
            <person name="Brown J.L."/>
            <person name="Bruce D."/>
            <person name="Detter C."/>
            <person name="Munk C."/>
            <person name="Smith L.A."/>
            <person name="Smith T.J."/>
            <person name="Sutton G."/>
            <person name="Brettin T.S."/>
        </authorList>
    </citation>
    <scope>NUCLEOTIDE SEQUENCE [LARGE SCALE GENOMIC DNA]</scope>
    <source>
        <strain>Eklund 17B / Type B</strain>
    </source>
</reference>
<dbReference type="EMBL" id="CP001056">
    <property type="protein sequence ID" value="ACD24812.1"/>
    <property type="molecule type" value="Genomic_DNA"/>
</dbReference>
<dbReference type="SMR" id="B2TJ69"/>
<dbReference type="KEGG" id="cbk:CLL_A1287"/>
<dbReference type="PATRIC" id="fig|935198.13.peg.1233"/>
<dbReference type="HOGENOM" id="CLU_040469_3_2_9"/>
<dbReference type="Proteomes" id="UP000001195">
    <property type="component" value="Chromosome"/>
</dbReference>
<dbReference type="GO" id="GO:0005829">
    <property type="term" value="C:cytosol"/>
    <property type="evidence" value="ECO:0007669"/>
    <property type="project" value="TreeGrafter"/>
</dbReference>
<dbReference type="GO" id="GO:0005524">
    <property type="term" value="F:ATP binding"/>
    <property type="evidence" value="ECO:0007669"/>
    <property type="project" value="UniProtKB-UniRule"/>
</dbReference>
<dbReference type="GO" id="GO:0016887">
    <property type="term" value="F:ATP hydrolysis activity"/>
    <property type="evidence" value="ECO:0007669"/>
    <property type="project" value="InterPro"/>
</dbReference>
<dbReference type="GO" id="GO:0140664">
    <property type="term" value="F:ATP-dependent DNA damage sensor activity"/>
    <property type="evidence" value="ECO:0007669"/>
    <property type="project" value="InterPro"/>
</dbReference>
<dbReference type="GO" id="GO:0003684">
    <property type="term" value="F:damaged DNA binding"/>
    <property type="evidence" value="ECO:0007669"/>
    <property type="project" value="UniProtKB-UniRule"/>
</dbReference>
<dbReference type="GO" id="GO:0003697">
    <property type="term" value="F:single-stranded DNA binding"/>
    <property type="evidence" value="ECO:0007669"/>
    <property type="project" value="UniProtKB-UniRule"/>
</dbReference>
<dbReference type="GO" id="GO:0006310">
    <property type="term" value="P:DNA recombination"/>
    <property type="evidence" value="ECO:0007669"/>
    <property type="project" value="UniProtKB-UniRule"/>
</dbReference>
<dbReference type="GO" id="GO:0006281">
    <property type="term" value="P:DNA repair"/>
    <property type="evidence" value="ECO:0007669"/>
    <property type="project" value="UniProtKB-UniRule"/>
</dbReference>
<dbReference type="GO" id="GO:0009432">
    <property type="term" value="P:SOS response"/>
    <property type="evidence" value="ECO:0007669"/>
    <property type="project" value="UniProtKB-UniRule"/>
</dbReference>
<dbReference type="CDD" id="cd00983">
    <property type="entry name" value="RecA"/>
    <property type="match status" value="1"/>
</dbReference>
<dbReference type="FunFam" id="3.40.50.300:FF:000087">
    <property type="entry name" value="Recombinase RecA"/>
    <property type="match status" value="1"/>
</dbReference>
<dbReference type="Gene3D" id="3.40.50.300">
    <property type="entry name" value="P-loop containing nucleotide triphosphate hydrolases"/>
    <property type="match status" value="1"/>
</dbReference>
<dbReference type="HAMAP" id="MF_00268">
    <property type="entry name" value="RecA"/>
    <property type="match status" value="1"/>
</dbReference>
<dbReference type="InterPro" id="IPR003593">
    <property type="entry name" value="AAA+_ATPase"/>
</dbReference>
<dbReference type="InterPro" id="IPR013765">
    <property type="entry name" value="DNA_recomb/repair_RecA"/>
</dbReference>
<dbReference type="InterPro" id="IPR020584">
    <property type="entry name" value="DNA_recomb/repair_RecA_CS"/>
</dbReference>
<dbReference type="InterPro" id="IPR027417">
    <property type="entry name" value="P-loop_NTPase"/>
</dbReference>
<dbReference type="InterPro" id="IPR049261">
    <property type="entry name" value="RecA-like_C"/>
</dbReference>
<dbReference type="InterPro" id="IPR049428">
    <property type="entry name" value="RecA-like_N"/>
</dbReference>
<dbReference type="InterPro" id="IPR020588">
    <property type="entry name" value="RecA_ATP-bd"/>
</dbReference>
<dbReference type="InterPro" id="IPR023400">
    <property type="entry name" value="RecA_C_sf"/>
</dbReference>
<dbReference type="InterPro" id="IPR020587">
    <property type="entry name" value="RecA_monomer-monomer_interface"/>
</dbReference>
<dbReference type="NCBIfam" id="TIGR02012">
    <property type="entry name" value="tigrfam_recA"/>
    <property type="match status" value="1"/>
</dbReference>
<dbReference type="PANTHER" id="PTHR45900:SF1">
    <property type="entry name" value="MITOCHONDRIAL DNA REPAIR PROTEIN RECA HOMOLOG-RELATED"/>
    <property type="match status" value="1"/>
</dbReference>
<dbReference type="PANTHER" id="PTHR45900">
    <property type="entry name" value="RECA"/>
    <property type="match status" value="1"/>
</dbReference>
<dbReference type="Pfam" id="PF00154">
    <property type="entry name" value="RecA"/>
    <property type="match status" value="1"/>
</dbReference>
<dbReference type="Pfam" id="PF21096">
    <property type="entry name" value="RecA_C"/>
    <property type="match status" value="1"/>
</dbReference>
<dbReference type="PRINTS" id="PR00142">
    <property type="entry name" value="RECA"/>
</dbReference>
<dbReference type="SMART" id="SM00382">
    <property type="entry name" value="AAA"/>
    <property type="match status" value="1"/>
</dbReference>
<dbReference type="SUPFAM" id="SSF52540">
    <property type="entry name" value="P-loop containing nucleoside triphosphate hydrolases"/>
    <property type="match status" value="1"/>
</dbReference>
<dbReference type="SUPFAM" id="SSF54752">
    <property type="entry name" value="RecA protein, C-terminal domain"/>
    <property type="match status" value="1"/>
</dbReference>
<dbReference type="PROSITE" id="PS00321">
    <property type="entry name" value="RECA_1"/>
    <property type="match status" value="1"/>
</dbReference>
<dbReference type="PROSITE" id="PS50162">
    <property type="entry name" value="RECA_2"/>
    <property type="match status" value="1"/>
</dbReference>
<dbReference type="PROSITE" id="PS50163">
    <property type="entry name" value="RECA_3"/>
    <property type="match status" value="1"/>
</dbReference>
<evidence type="ECO:0000255" key="1">
    <source>
        <dbReference type="HAMAP-Rule" id="MF_00268"/>
    </source>
</evidence>
<gene>
    <name evidence="1" type="primary">recA</name>
    <name type="ordered locus">CLL_A1287</name>
</gene>
<comment type="function">
    <text evidence="1">Can catalyze the hydrolysis of ATP in the presence of single-stranded DNA, the ATP-dependent uptake of single-stranded DNA by duplex DNA, and the ATP-dependent hybridization of homologous single-stranded DNAs. It interacts with LexA causing its activation and leading to its autocatalytic cleavage.</text>
</comment>
<comment type="subcellular location">
    <subcellularLocation>
        <location evidence="1">Cytoplasm</location>
    </subcellularLocation>
</comment>
<comment type="similarity">
    <text evidence="1">Belongs to the RecA family.</text>
</comment>